<evidence type="ECO:0000255" key="1">
    <source>
        <dbReference type="HAMAP-Rule" id="MF_01350"/>
    </source>
</evidence>
<comment type="function">
    <text evidence="1">NDH-1 shuttles electrons from NADH, via FMN and iron-sulfur (Fe-S) centers, to quinones in the respiratory chain. The immediate electron acceptor for the enzyme in this species is believed to be ubiquinone. Couples the redox reaction to proton translocation (for every two electrons transferred, four hydrogen ions are translocated across the cytoplasmic membrane), and thus conserves the redox energy in a proton gradient. This subunit may bind ubiquinone.</text>
</comment>
<comment type="catalytic activity">
    <reaction evidence="1">
        <text>a quinone + NADH + 5 H(+)(in) = a quinol + NAD(+) + 4 H(+)(out)</text>
        <dbReference type="Rhea" id="RHEA:57888"/>
        <dbReference type="ChEBI" id="CHEBI:15378"/>
        <dbReference type="ChEBI" id="CHEBI:24646"/>
        <dbReference type="ChEBI" id="CHEBI:57540"/>
        <dbReference type="ChEBI" id="CHEBI:57945"/>
        <dbReference type="ChEBI" id="CHEBI:132124"/>
    </reaction>
</comment>
<comment type="subunit">
    <text evidence="1">NDH-1 is composed of 14 different subunits. Subunits NuoA, H, J, K, L, M, N constitute the membrane sector of the complex.</text>
</comment>
<comment type="subcellular location">
    <subcellularLocation>
        <location evidence="1">Cell inner membrane</location>
        <topology evidence="1">Multi-pass membrane protein</topology>
    </subcellularLocation>
</comment>
<comment type="similarity">
    <text evidence="1">Belongs to the complex I subunit 1 family.</text>
</comment>
<keyword id="KW-0997">Cell inner membrane</keyword>
<keyword id="KW-1003">Cell membrane</keyword>
<keyword id="KW-0472">Membrane</keyword>
<keyword id="KW-0520">NAD</keyword>
<keyword id="KW-0874">Quinone</keyword>
<keyword id="KW-1185">Reference proteome</keyword>
<keyword id="KW-1278">Translocase</keyword>
<keyword id="KW-0812">Transmembrane</keyword>
<keyword id="KW-1133">Transmembrane helix</keyword>
<keyword id="KW-0830">Ubiquinone</keyword>
<organism>
    <name type="scientific">Rhizobium meliloti (strain 1021)</name>
    <name type="common">Ensifer meliloti</name>
    <name type="synonym">Sinorhizobium meliloti</name>
    <dbReference type="NCBI Taxonomy" id="266834"/>
    <lineage>
        <taxon>Bacteria</taxon>
        <taxon>Pseudomonadati</taxon>
        <taxon>Pseudomonadota</taxon>
        <taxon>Alphaproteobacteria</taxon>
        <taxon>Hyphomicrobiales</taxon>
        <taxon>Rhizobiaceae</taxon>
        <taxon>Sinorhizobium/Ensifer group</taxon>
        <taxon>Sinorhizobium</taxon>
    </lineage>
</organism>
<gene>
    <name evidence="1" type="primary">nuoH1</name>
    <name type="ordered locus">R01273</name>
    <name type="ORF">SMc01921</name>
</gene>
<reference key="1">
    <citation type="journal article" date="2001" name="Proc. Natl. Acad. Sci. U.S.A.">
        <title>Analysis of the chromosome sequence of the legume symbiont Sinorhizobium meliloti strain 1021.</title>
        <authorList>
            <person name="Capela D."/>
            <person name="Barloy-Hubler F."/>
            <person name="Gouzy J."/>
            <person name="Bothe G."/>
            <person name="Ampe F."/>
            <person name="Batut J."/>
            <person name="Boistard P."/>
            <person name="Becker A."/>
            <person name="Boutry M."/>
            <person name="Cadieu E."/>
            <person name="Dreano S."/>
            <person name="Gloux S."/>
            <person name="Godrie T."/>
            <person name="Goffeau A."/>
            <person name="Kahn D."/>
            <person name="Kiss E."/>
            <person name="Lelaure V."/>
            <person name="Masuy D."/>
            <person name="Pohl T."/>
            <person name="Portetelle D."/>
            <person name="Puehler A."/>
            <person name="Purnelle B."/>
            <person name="Ramsperger U."/>
            <person name="Renard C."/>
            <person name="Thebault P."/>
            <person name="Vandenbol M."/>
            <person name="Weidner S."/>
            <person name="Galibert F."/>
        </authorList>
    </citation>
    <scope>NUCLEOTIDE SEQUENCE [LARGE SCALE GENOMIC DNA]</scope>
    <source>
        <strain>1021</strain>
    </source>
</reference>
<reference key="2">
    <citation type="journal article" date="2001" name="Science">
        <title>The composite genome of the legume symbiont Sinorhizobium meliloti.</title>
        <authorList>
            <person name="Galibert F."/>
            <person name="Finan T.M."/>
            <person name="Long S.R."/>
            <person name="Puehler A."/>
            <person name="Abola P."/>
            <person name="Ampe F."/>
            <person name="Barloy-Hubler F."/>
            <person name="Barnett M.J."/>
            <person name="Becker A."/>
            <person name="Boistard P."/>
            <person name="Bothe G."/>
            <person name="Boutry M."/>
            <person name="Bowser L."/>
            <person name="Buhrmester J."/>
            <person name="Cadieu E."/>
            <person name="Capela D."/>
            <person name="Chain P."/>
            <person name="Cowie A."/>
            <person name="Davis R.W."/>
            <person name="Dreano S."/>
            <person name="Federspiel N.A."/>
            <person name="Fisher R.F."/>
            <person name="Gloux S."/>
            <person name="Godrie T."/>
            <person name="Goffeau A."/>
            <person name="Golding B."/>
            <person name="Gouzy J."/>
            <person name="Gurjal M."/>
            <person name="Hernandez-Lucas I."/>
            <person name="Hong A."/>
            <person name="Huizar L."/>
            <person name="Hyman R.W."/>
            <person name="Jones T."/>
            <person name="Kahn D."/>
            <person name="Kahn M.L."/>
            <person name="Kalman S."/>
            <person name="Keating D.H."/>
            <person name="Kiss E."/>
            <person name="Komp C."/>
            <person name="Lelaure V."/>
            <person name="Masuy D."/>
            <person name="Palm C."/>
            <person name="Peck M.C."/>
            <person name="Pohl T.M."/>
            <person name="Portetelle D."/>
            <person name="Purnelle B."/>
            <person name="Ramsperger U."/>
            <person name="Surzycki R."/>
            <person name="Thebault P."/>
            <person name="Vandenbol M."/>
            <person name="Vorhoelter F.J."/>
            <person name="Weidner S."/>
            <person name="Wells D.H."/>
            <person name="Wong K."/>
            <person name="Yeh K.-C."/>
            <person name="Batut J."/>
        </authorList>
    </citation>
    <scope>NUCLEOTIDE SEQUENCE [LARGE SCALE GENOMIC DNA]</scope>
    <source>
        <strain>1021</strain>
    </source>
</reference>
<name>NUOH1_RHIME</name>
<feature type="chain" id="PRO_0000244938" description="NADH-quinone oxidoreductase subunit H 1">
    <location>
        <begin position="1"/>
        <end position="347"/>
    </location>
</feature>
<feature type="transmembrane region" description="Helical" evidence="1">
    <location>
        <begin position="14"/>
        <end position="34"/>
    </location>
</feature>
<feature type="transmembrane region" description="Helical" evidence="1">
    <location>
        <begin position="50"/>
        <end position="70"/>
    </location>
</feature>
<feature type="transmembrane region" description="Helical" evidence="1">
    <location>
        <begin position="83"/>
        <end position="103"/>
    </location>
</feature>
<feature type="transmembrane region" description="Helical" evidence="1">
    <location>
        <begin position="115"/>
        <end position="135"/>
    </location>
</feature>
<feature type="transmembrane region" description="Helical" evidence="1">
    <location>
        <begin position="161"/>
        <end position="181"/>
    </location>
</feature>
<feature type="transmembrane region" description="Helical" evidence="1">
    <location>
        <begin position="198"/>
        <end position="218"/>
    </location>
</feature>
<feature type="transmembrane region" description="Helical" evidence="1">
    <location>
        <begin position="258"/>
        <end position="278"/>
    </location>
</feature>
<feature type="transmembrane region" description="Helical" evidence="1">
    <location>
        <begin position="286"/>
        <end position="306"/>
    </location>
</feature>
<feature type="transmembrane region" description="Helical" evidence="1">
    <location>
        <begin position="321"/>
        <end position="341"/>
    </location>
</feature>
<sequence length="347" mass="38443">MDAFFSTYVWPTAIMIGQSLLLLVALLLFIAYVLLADRKIWAAVQLRRGPNVVGPFGLFQSFADLLKFVFKEPVIPAGANKTIFLLAPLVSVTLALAAWAVIPLNANWVIANINVGILFVFAISSLEVYGIIMGGWASNSKYPFLGALRSAAQMVSYEVSIGFVIVTVLLCVGSLNLTDIVNAQNDGLGTMLGLPASFLDWHWLSLFPMFIIFFISALAETNRPPFDLPEAESELVAGFMVEYGSTPYMMFMLGEYAAICLMCALTTILFLGGWLPPVDIWLLNWVPGIIWFVLKASLVFFMFAMVKAFVPRYRYDQLMRLGWKVFLPLSLAMVVIVAFVLKLTGWA</sequence>
<proteinExistence type="inferred from homology"/>
<dbReference type="EC" id="7.1.1.-" evidence="1"/>
<dbReference type="EMBL" id="AL591688">
    <property type="protein sequence ID" value="CAC45852.1"/>
    <property type="molecule type" value="Genomic_DNA"/>
</dbReference>
<dbReference type="RefSeq" id="NP_385379.1">
    <property type="nucleotide sequence ID" value="NC_003047.1"/>
</dbReference>
<dbReference type="SMR" id="Q92QP5"/>
<dbReference type="EnsemblBacteria" id="CAC45852">
    <property type="protein sequence ID" value="CAC45852"/>
    <property type="gene ID" value="SMc01921"/>
</dbReference>
<dbReference type="KEGG" id="sme:SMc01921"/>
<dbReference type="PATRIC" id="fig|266834.11.peg.2687"/>
<dbReference type="eggNOG" id="COG1005">
    <property type="taxonomic scope" value="Bacteria"/>
</dbReference>
<dbReference type="HOGENOM" id="CLU_015134_0_1_5"/>
<dbReference type="OrthoDB" id="9803734at2"/>
<dbReference type="Proteomes" id="UP000001976">
    <property type="component" value="Chromosome"/>
</dbReference>
<dbReference type="GO" id="GO:0005886">
    <property type="term" value="C:plasma membrane"/>
    <property type="evidence" value="ECO:0007669"/>
    <property type="project" value="UniProtKB-SubCell"/>
</dbReference>
<dbReference type="GO" id="GO:0003954">
    <property type="term" value="F:NADH dehydrogenase activity"/>
    <property type="evidence" value="ECO:0007669"/>
    <property type="project" value="TreeGrafter"/>
</dbReference>
<dbReference type="GO" id="GO:0016655">
    <property type="term" value="F:oxidoreductase activity, acting on NAD(P)H, quinone or similar compound as acceptor"/>
    <property type="evidence" value="ECO:0007669"/>
    <property type="project" value="UniProtKB-UniRule"/>
</dbReference>
<dbReference type="GO" id="GO:0048038">
    <property type="term" value="F:quinone binding"/>
    <property type="evidence" value="ECO:0007669"/>
    <property type="project" value="UniProtKB-KW"/>
</dbReference>
<dbReference type="GO" id="GO:0009060">
    <property type="term" value="P:aerobic respiration"/>
    <property type="evidence" value="ECO:0007669"/>
    <property type="project" value="TreeGrafter"/>
</dbReference>
<dbReference type="HAMAP" id="MF_01350">
    <property type="entry name" value="NDH1_NuoH"/>
    <property type="match status" value="1"/>
</dbReference>
<dbReference type="InterPro" id="IPR001694">
    <property type="entry name" value="NADH_UbQ_OxRdtase_su1/FPO"/>
</dbReference>
<dbReference type="InterPro" id="IPR018086">
    <property type="entry name" value="NADH_UbQ_OxRdtase_su1_CS"/>
</dbReference>
<dbReference type="NCBIfam" id="NF004741">
    <property type="entry name" value="PRK06076.1-2"/>
    <property type="match status" value="1"/>
</dbReference>
<dbReference type="NCBIfam" id="NF004745">
    <property type="entry name" value="PRK06076.1-6"/>
    <property type="match status" value="1"/>
</dbReference>
<dbReference type="PANTHER" id="PTHR11432">
    <property type="entry name" value="NADH DEHYDROGENASE SUBUNIT 1"/>
    <property type="match status" value="1"/>
</dbReference>
<dbReference type="PANTHER" id="PTHR11432:SF3">
    <property type="entry name" value="NADH-UBIQUINONE OXIDOREDUCTASE CHAIN 1"/>
    <property type="match status" value="1"/>
</dbReference>
<dbReference type="Pfam" id="PF00146">
    <property type="entry name" value="NADHdh"/>
    <property type="match status" value="1"/>
</dbReference>
<dbReference type="PROSITE" id="PS00668">
    <property type="entry name" value="COMPLEX1_ND1_2"/>
    <property type="match status" value="1"/>
</dbReference>
<accession>Q92QP5</accession>
<protein>
    <recommendedName>
        <fullName evidence="1">NADH-quinone oxidoreductase subunit H 1</fullName>
        <ecNumber evidence="1">7.1.1.-</ecNumber>
    </recommendedName>
    <alternativeName>
        <fullName evidence="1">NADH dehydrogenase I subunit H 1</fullName>
    </alternativeName>
    <alternativeName>
        <fullName evidence="1">NDH-1 subunit H 1</fullName>
    </alternativeName>
</protein>